<evidence type="ECO:0000255" key="1">
    <source>
        <dbReference type="HAMAP-Rule" id="MF_00740"/>
    </source>
</evidence>
<sequence>MARVFLFVLDSFGIGGAPDAEAFGDLGADTLGHIAEFCASGAGDRAGLREGPLQLPNMSALGLVHAAKLATGRLPAGMPLPERVYGVYGAASEVSRGKDTPSGHWEIAGTPVRFDWGYFPAEGDAFPPQLVEAICREGEVPGILGNCHASGTDIIARHGEEHMRSGKPICYTSSDSVFQIAAHERTFGLERLLELCQVVRRLVDDYNIGRVIARPFVGDNPGNFTRTGHRRDFSVLPPEPTILDRLEAAGRTVHAIGKIGDIFAHRGVTRLTKANGNMELFDASLTVVEEAEEGDLVFTNFVDFDMLYGHRRDVPGYAAALEAFDARLPDLDRRLRPGDMVILTADHGCDPTWRGTDHTRERVPVLMFGPSLRSRSFGIANSFAHIGETAARHLGIAPGPHGRSLL</sequence>
<name>DEOB_SINFN</name>
<comment type="function">
    <text evidence="1">Isomerase that catalyzes the conversion of deoxy-ribose 1-phosphate (dRib-1-P) and ribose 1-phosphate (Rib-1-P) to deoxy-ribose 5-phosphate (dRib-5-P) and ribose 5-phosphate (Rib-5-P), respectively.</text>
</comment>
<comment type="catalytic activity">
    <reaction evidence="1">
        <text>2-deoxy-alpha-D-ribose 1-phosphate = 2-deoxy-D-ribose 5-phosphate</text>
        <dbReference type="Rhea" id="RHEA:27658"/>
        <dbReference type="ChEBI" id="CHEBI:57259"/>
        <dbReference type="ChEBI" id="CHEBI:62877"/>
        <dbReference type="EC" id="5.4.2.7"/>
    </reaction>
</comment>
<comment type="catalytic activity">
    <reaction evidence="1">
        <text>alpha-D-ribose 1-phosphate = D-ribose 5-phosphate</text>
        <dbReference type="Rhea" id="RHEA:18793"/>
        <dbReference type="ChEBI" id="CHEBI:57720"/>
        <dbReference type="ChEBI" id="CHEBI:78346"/>
        <dbReference type="EC" id="5.4.2.7"/>
    </reaction>
</comment>
<comment type="cofactor">
    <cofactor evidence="1">
        <name>Mn(2+)</name>
        <dbReference type="ChEBI" id="CHEBI:29035"/>
    </cofactor>
    <text evidence="1">Binds 2 manganese ions.</text>
</comment>
<comment type="pathway">
    <text evidence="1">Carbohydrate degradation; 2-deoxy-D-ribose 1-phosphate degradation; D-glyceraldehyde 3-phosphate and acetaldehyde from 2-deoxy-alpha-D-ribose 1-phosphate: step 1/2.</text>
</comment>
<comment type="subcellular location">
    <subcellularLocation>
        <location evidence="1">Cytoplasm</location>
    </subcellularLocation>
</comment>
<comment type="similarity">
    <text evidence="1">Belongs to the phosphopentomutase family.</text>
</comment>
<dbReference type="EC" id="5.4.2.7" evidence="1"/>
<dbReference type="EMBL" id="CP001389">
    <property type="protein sequence ID" value="ACP27184.1"/>
    <property type="molecule type" value="Genomic_DNA"/>
</dbReference>
<dbReference type="RefSeq" id="WP_012709930.1">
    <property type="nucleotide sequence ID" value="NC_012587.1"/>
</dbReference>
<dbReference type="RefSeq" id="YP_002827937.1">
    <property type="nucleotide sequence ID" value="NC_012587.1"/>
</dbReference>
<dbReference type="SMR" id="C3MBH5"/>
<dbReference type="STRING" id="394.NGR_c34600"/>
<dbReference type="KEGG" id="rhi:NGR_c34600"/>
<dbReference type="PATRIC" id="fig|394.7.peg.6308"/>
<dbReference type="eggNOG" id="COG1015">
    <property type="taxonomic scope" value="Bacteria"/>
</dbReference>
<dbReference type="HOGENOM" id="CLU_053861_0_0_5"/>
<dbReference type="OrthoDB" id="9769930at2"/>
<dbReference type="UniPathway" id="UPA00002">
    <property type="reaction ID" value="UER00467"/>
</dbReference>
<dbReference type="Proteomes" id="UP000001054">
    <property type="component" value="Chromosome"/>
</dbReference>
<dbReference type="GO" id="GO:0005829">
    <property type="term" value="C:cytosol"/>
    <property type="evidence" value="ECO:0007669"/>
    <property type="project" value="TreeGrafter"/>
</dbReference>
<dbReference type="GO" id="GO:0000287">
    <property type="term" value="F:magnesium ion binding"/>
    <property type="evidence" value="ECO:0007669"/>
    <property type="project" value="InterPro"/>
</dbReference>
<dbReference type="GO" id="GO:0030145">
    <property type="term" value="F:manganese ion binding"/>
    <property type="evidence" value="ECO:0007669"/>
    <property type="project" value="UniProtKB-UniRule"/>
</dbReference>
<dbReference type="GO" id="GO:0008973">
    <property type="term" value="F:phosphopentomutase activity"/>
    <property type="evidence" value="ECO:0007669"/>
    <property type="project" value="UniProtKB-UniRule"/>
</dbReference>
<dbReference type="GO" id="GO:0006018">
    <property type="term" value="P:2-deoxyribose 1-phosphate catabolic process"/>
    <property type="evidence" value="ECO:0007669"/>
    <property type="project" value="UniProtKB-UniRule"/>
</dbReference>
<dbReference type="GO" id="GO:0006015">
    <property type="term" value="P:5-phosphoribose 1-diphosphate biosynthetic process"/>
    <property type="evidence" value="ECO:0007669"/>
    <property type="project" value="UniProtKB-UniPathway"/>
</dbReference>
<dbReference type="GO" id="GO:0043094">
    <property type="term" value="P:metabolic compound salvage"/>
    <property type="evidence" value="ECO:0007669"/>
    <property type="project" value="InterPro"/>
</dbReference>
<dbReference type="GO" id="GO:0009117">
    <property type="term" value="P:nucleotide metabolic process"/>
    <property type="evidence" value="ECO:0007669"/>
    <property type="project" value="InterPro"/>
</dbReference>
<dbReference type="CDD" id="cd16009">
    <property type="entry name" value="PPM"/>
    <property type="match status" value="1"/>
</dbReference>
<dbReference type="FunFam" id="3.30.70.1250:FF:000001">
    <property type="entry name" value="Phosphopentomutase"/>
    <property type="match status" value="1"/>
</dbReference>
<dbReference type="Gene3D" id="3.40.720.10">
    <property type="entry name" value="Alkaline Phosphatase, subunit A"/>
    <property type="match status" value="1"/>
</dbReference>
<dbReference type="Gene3D" id="3.30.70.1250">
    <property type="entry name" value="Phosphopentomutase"/>
    <property type="match status" value="1"/>
</dbReference>
<dbReference type="HAMAP" id="MF_00740">
    <property type="entry name" value="Phosphopentomut"/>
    <property type="match status" value="1"/>
</dbReference>
<dbReference type="InterPro" id="IPR017850">
    <property type="entry name" value="Alkaline_phosphatase_core_sf"/>
</dbReference>
<dbReference type="InterPro" id="IPR010045">
    <property type="entry name" value="DeoB"/>
</dbReference>
<dbReference type="InterPro" id="IPR006124">
    <property type="entry name" value="Metalloenzyme"/>
</dbReference>
<dbReference type="InterPro" id="IPR024052">
    <property type="entry name" value="Phosphopentomutase_DeoB_cap_sf"/>
</dbReference>
<dbReference type="NCBIfam" id="TIGR01696">
    <property type="entry name" value="deoB"/>
    <property type="match status" value="1"/>
</dbReference>
<dbReference type="NCBIfam" id="NF003766">
    <property type="entry name" value="PRK05362.1"/>
    <property type="match status" value="1"/>
</dbReference>
<dbReference type="PANTHER" id="PTHR21110">
    <property type="entry name" value="PHOSPHOPENTOMUTASE"/>
    <property type="match status" value="1"/>
</dbReference>
<dbReference type="PANTHER" id="PTHR21110:SF0">
    <property type="entry name" value="PHOSPHOPENTOMUTASE"/>
    <property type="match status" value="1"/>
</dbReference>
<dbReference type="Pfam" id="PF01676">
    <property type="entry name" value="Metalloenzyme"/>
    <property type="match status" value="1"/>
</dbReference>
<dbReference type="PIRSF" id="PIRSF001491">
    <property type="entry name" value="Ppentomutase"/>
    <property type="match status" value="1"/>
</dbReference>
<dbReference type="SUPFAM" id="SSF53649">
    <property type="entry name" value="Alkaline phosphatase-like"/>
    <property type="match status" value="1"/>
</dbReference>
<dbReference type="SUPFAM" id="SSF143856">
    <property type="entry name" value="DeoB insert domain-like"/>
    <property type="match status" value="1"/>
</dbReference>
<accession>C3MBH5</accession>
<organism>
    <name type="scientific">Sinorhizobium fredii (strain NBRC 101917 / NGR234)</name>
    <dbReference type="NCBI Taxonomy" id="394"/>
    <lineage>
        <taxon>Bacteria</taxon>
        <taxon>Pseudomonadati</taxon>
        <taxon>Pseudomonadota</taxon>
        <taxon>Alphaproteobacteria</taxon>
        <taxon>Hyphomicrobiales</taxon>
        <taxon>Rhizobiaceae</taxon>
        <taxon>Sinorhizobium/Ensifer group</taxon>
        <taxon>Sinorhizobium</taxon>
    </lineage>
</organism>
<proteinExistence type="inferred from homology"/>
<protein>
    <recommendedName>
        <fullName evidence="1">Phosphopentomutase</fullName>
        <ecNumber evidence="1">5.4.2.7</ecNumber>
    </recommendedName>
    <alternativeName>
        <fullName evidence="1">Phosphodeoxyribomutase</fullName>
    </alternativeName>
</protein>
<reference key="1">
    <citation type="journal article" date="2009" name="Appl. Environ. Microbiol.">
        <title>Rhizobium sp. strain NGR234 possesses a remarkable number of secretion systems.</title>
        <authorList>
            <person name="Schmeisser C."/>
            <person name="Liesegang H."/>
            <person name="Krysciak D."/>
            <person name="Bakkou N."/>
            <person name="Le Quere A."/>
            <person name="Wollherr A."/>
            <person name="Heinemeyer I."/>
            <person name="Morgenstern B."/>
            <person name="Pommerening-Roeser A."/>
            <person name="Flores M."/>
            <person name="Palacios R."/>
            <person name="Brenner S."/>
            <person name="Gottschalk G."/>
            <person name="Schmitz R.A."/>
            <person name="Broughton W.J."/>
            <person name="Perret X."/>
            <person name="Strittmatter A.W."/>
            <person name="Streit W.R."/>
        </authorList>
    </citation>
    <scope>NUCLEOTIDE SEQUENCE [LARGE SCALE GENOMIC DNA]</scope>
    <source>
        <strain>NBRC 101917 / NGR234</strain>
    </source>
</reference>
<gene>
    <name evidence="1" type="primary">deoB</name>
    <name type="ordered locus">NGR_c34600</name>
</gene>
<feature type="chain" id="PRO_1000148248" description="Phosphopentomutase">
    <location>
        <begin position="1"/>
        <end position="406"/>
    </location>
</feature>
<feature type="binding site" evidence="1">
    <location>
        <position position="10"/>
    </location>
    <ligand>
        <name>Mn(2+)</name>
        <dbReference type="ChEBI" id="CHEBI:29035"/>
        <label>1</label>
    </ligand>
</feature>
<feature type="binding site" evidence="1">
    <location>
        <position position="305"/>
    </location>
    <ligand>
        <name>Mn(2+)</name>
        <dbReference type="ChEBI" id="CHEBI:29035"/>
        <label>2</label>
    </ligand>
</feature>
<feature type="binding site" evidence="1">
    <location>
        <position position="310"/>
    </location>
    <ligand>
        <name>Mn(2+)</name>
        <dbReference type="ChEBI" id="CHEBI:29035"/>
        <label>2</label>
    </ligand>
</feature>
<feature type="binding site" evidence="1">
    <location>
        <position position="346"/>
    </location>
    <ligand>
        <name>Mn(2+)</name>
        <dbReference type="ChEBI" id="CHEBI:29035"/>
        <label>1</label>
    </ligand>
</feature>
<feature type="binding site" evidence="1">
    <location>
        <position position="347"/>
    </location>
    <ligand>
        <name>Mn(2+)</name>
        <dbReference type="ChEBI" id="CHEBI:29035"/>
        <label>1</label>
    </ligand>
</feature>
<feature type="binding site" evidence="1">
    <location>
        <position position="358"/>
    </location>
    <ligand>
        <name>Mn(2+)</name>
        <dbReference type="ChEBI" id="CHEBI:29035"/>
        <label>2</label>
    </ligand>
</feature>
<keyword id="KW-0963">Cytoplasm</keyword>
<keyword id="KW-0413">Isomerase</keyword>
<keyword id="KW-0464">Manganese</keyword>
<keyword id="KW-0479">Metal-binding</keyword>
<keyword id="KW-1185">Reference proteome</keyword>